<accession>Q6JD72</accession>
<accession>K7TQL5</accession>
<name>TPS5C_MAIZE</name>
<reference key="1">
    <citation type="journal article" date="2004" name="Plant Cell">
        <title>The variability of sesquiterpenes emitted from two Zea mays cultivars is controlled by allelic variation of two terpene synthase genes encoding stereoselective multiple product enzymes.</title>
        <authorList>
            <person name="Koellner T.G."/>
            <person name="Schnee C."/>
            <person name="Gershenzon J."/>
            <person name="Degenhardt J."/>
        </authorList>
    </citation>
    <scope>NUCLEOTIDE SEQUENCE [MRNA]</scope>
    <scope>MUTAGENESIS OF TRP-163; THR-383; GLU-391; LYS-402; GLU-455 AND ILE-479</scope>
    <source>
        <strain>cv. B73</strain>
    </source>
</reference>
<reference key="2">
    <citation type="journal article" date="2009" name="Science">
        <title>The B73 maize genome: complexity, diversity, and dynamics.</title>
        <authorList>
            <person name="Schnable P.S."/>
            <person name="Ware D."/>
            <person name="Fulton R.S."/>
            <person name="Stein J.C."/>
            <person name="Wei F."/>
            <person name="Pasternak S."/>
            <person name="Liang C."/>
            <person name="Zhang J."/>
            <person name="Fulton L."/>
            <person name="Graves T.A."/>
            <person name="Minx P."/>
            <person name="Reily A.D."/>
            <person name="Courtney L."/>
            <person name="Kruchowski S.S."/>
            <person name="Tomlinson C."/>
            <person name="Strong C."/>
            <person name="Delehaunty K."/>
            <person name="Fronick C."/>
            <person name="Courtney B."/>
            <person name="Rock S.M."/>
            <person name="Belter E."/>
            <person name="Du F."/>
            <person name="Kim K."/>
            <person name="Abbott R.M."/>
            <person name="Cotton M."/>
            <person name="Levy A."/>
            <person name="Marchetto P."/>
            <person name="Ochoa K."/>
            <person name="Jackson S.M."/>
            <person name="Gillam B."/>
            <person name="Chen W."/>
            <person name="Yan L."/>
            <person name="Higginbotham J."/>
            <person name="Cardenas M."/>
            <person name="Waligorski J."/>
            <person name="Applebaum E."/>
            <person name="Phelps L."/>
            <person name="Falcone J."/>
            <person name="Kanchi K."/>
            <person name="Thane T."/>
            <person name="Scimone A."/>
            <person name="Thane N."/>
            <person name="Henke J."/>
            <person name="Wang T."/>
            <person name="Ruppert J."/>
            <person name="Shah N."/>
            <person name="Rotter K."/>
            <person name="Hodges J."/>
            <person name="Ingenthron E."/>
            <person name="Cordes M."/>
            <person name="Kohlberg S."/>
            <person name="Sgro J."/>
            <person name="Delgado B."/>
            <person name="Mead K."/>
            <person name="Chinwalla A."/>
            <person name="Leonard S."/>
            <person name="Crouse K."/>
            <person name="Collura K."/>
            <person name="Kudrna D."/>
            <person name="Currie J."/>
            <person name="He R."/>
            <person name="Angelova A."/>
            <person name="Rajasekar S."/>
            <person name="Mueller T."/>
            <person name="Lomeli R."/>
            <person name="Scara G."/>
            <person name="Ko A."/>
            <person name="Delaney K."/>
            <person name="Wissotski M."/>
            <person name="Lopez G."/>
            <person name="Campos D."/>
            <person name="Braidotti M."/>
            <person name="Ashley E."/>
            <person name="Golser W."/>
            <person name="Kim H."/>
            <person name="Lee S."/>
            <person name="Lin J."/>
            <person name="Dujmic Z."/>
            <person name="Kim W."/>
            <person name="Talag J."/>
            <person name="Zuccolo A."/>
            <person name="Fan C."/>
            <person name="Sebastian A."/>
            <person name="Kramer M."/>
            <person name="Spiegel L."/>
            <person name="Nascimento L."/>
            <person name="Zutavern T."/>
            <person name="Miller B."/>
            <person name="Ambroise C."/>
            <person name="Muller S."/>
            <person name="Spooner W."/>
            <person name="Narechania A."/>
            <person name="Ren L."/>
            <person name="Wei S."/>
            <person name="Kumari S."/>
            <person name="Faga B."/>
            <person name="Levy M.J."/>
            <person name="McMahan L."/>
            <person name="Van Buren P."/>
            <person name="Vaughn M.W."/>
            <person name="Ying K."/>
            <person name="Yeh C.-T."/>
            <person name="Emrich S.J."/>
            <person name="Jia Y."/>
            <person name="Kalyanaraman A."/>
            <person name="Hsia A.-P."/>
            <person name="Barbazuk W.B."/>
            <person name="Baucom R.S."/>
            <person name="Brutnell T.P."/>
            <person name="Carpita N.C."/>
            <person name="Chaparro C."/>
            <person name="Chia J.-M."/>
            <person name="Deragon J.-M."/>
            <person name="Estill J.C."/>
            <person name="Fu Y."/>
            <person name="Jeddeloh J.A."/>
            <person name="Han Y."/>
            <person name="Lee H."/>
            <person name="Li P."/>
            <person name="Lisch D.R."/>
            <person name="Liu S."/>
            <person name="Liu Z."/>
            <person name="Nagel D.H."/>
            <person name="McCann M.C."/>
            <person name="SanMiguel P."/>
            <person name="Myers A.M."/>
            <person name="Nettleton D."/>
            <person name="Nguyen J."/>
            <person name="Penning B.W."/>
            <person name="Ponnala L."/>
            <person name="Schneider K.L."/>
            <person name="Schwartz D.C."/>
            <person name="Sharma A."/>
            <person name="Soderlund C."/>
            <person name="Springer N.M."/>
            <person name="Sun Q."/>
            <person name="Wang H."/>
            <person name="Waterman M."/>
            <person name="Westerman R."/>
            <person name="Wolfgruber T.K."/>
            <person name="Yang L."/>
            <person name="Yu Y."/>
            <person name="Zhang L."/>
            <person name="Zhou S."/>
            <person name="Zhu Q."/>
            <person name="Bennetzen J.L."/>
            <person name="Dawe R.K."/>
            <person name="Jiang J."/>
            <person name="Jiang N."/>
            <person name="Presting G.G."/>
            <person name="Wessler S.R."/>
            <person name="Aluru S."/>
            <person name="Martienssen R.A."/>
            <person name="Clifton S.W."/>
            <person name="McCombie W.R."/>
            <person name="Wing R.A."/>
            <person name="Wilson R.K."/>
        </authorList>
    </citation>
    <scope>NUCLEOTIDE SEQUENCE [LARGE SCALE GENOMIC DNA]</scope>
    <source>
        <strain>cv. B73</strain>
    </source>
</reference>
<reference key="3">
    <citation type="journal article" date="2019" name="Planta">
        <title>Biosynthesis and function of terpenoid defense compounds in maize (Zea mays).</title>
        <authorList>
            <person name="Block A.K."/>
            <person name="Vaughan M.M."/>
            <person name="Schmelz E.A."/>
            <person name="Christensen S.A."/>
        </authorList>
    </citation>
    <scope>REVIEW</scope>
</reference>
<evidence type="ECO:0000250" key="1">
    <source>
        <dbReference type="UniProtKB" id="A0A1C9J6A7"/>
    </source>
</evidence>
<evidence type="ECO:0000250" key="2">
    <source>
        <dbReference type="UniProtKB" id="Q40577"/>
    </source>
</evidence>
<evidence type="ECO:0000250" key="3">
    <source>
        <dbReference type="UniProtKB" id="Q5GJ60"/>
    </source>
</evidence>
<evidence type="ECO:0000250" key="4">
    <source>
        <dbReference type="UniProtKB" id="Q6JD73"/>
    </source>
</evidence>
<evidence type="ECO:0000250" key="5">
    <source>
        <dbReference type="UniProtKB" id="Q6Q3H2"/>
    </source>
</evidence>
<evidence type="ECO:0000269" key="6">
    <source>
    </source>
</evidence>
<evidence type="ECO:0000303" key="7">
    <source>
    </source>
</evidence>
<evidence type="ECO:0000305" key="8"/>
<evidence type="ECO:0000305" key="9">
    <source>
    </source>
</evidence>
<evidence type="ECO:0000305" key="10">
    <source>
    </source>
</evidence>
<evidence type="ECO:0000312" key="11">
    <source>
        <dbReference type="EMBL" id="AQK41282.1"/>
    </source>
</evidence>
<organism>
    <name type="scientific">Zea mays</name>
    <name type="common">Maize</name>
    <dbReference type="NCBI Taxonomy" id="4577"/>
    <lineage>
        <taxon>Eukaryota</taxon>
        <taxon>Viridiplantae</taxon>
        <taxon>Streptophyta</taxon>
        <taxon>Embryophyta</taxon>
        <taxon>Tracheophyta</taxon>
        <taxon>Spermatophyta</taxon>
        <taxon>Magnoliopsida</taxon>
        <taxon>Liliopsida</taxon>
        <taxon>Poales</taxon>
        <taxon>Poaceae</taxon>
        <taxon>PACMAD clade</taxon>
        <taxon>Panicoideae</taxon>
        <taxon>Andropogonodae</taxon>
        <taxon>Andropogoneae</taxon>
        <taxon>Tripsacinae</taxon>
        <taxon>Zea</taxon>
    </lineage>
</organism>
<comment type="function">
    <text>Non-functional sesquiterpene synthase having less than 1% of the activity found in cv. Delprim.</text>
</comment>
<comment type="cofactor">
    <cofactor evidence="4">
        <name>Mg(2+)</name>
        <dbReference type="ChEBI" id="CHEBI:18420"/>
    </cofactor>
    <cofactor evidence="4">
        <name>Mn(2+)</name>
        <dbReference type="ChEBI" id="CHEBI:29035"/>
    </cofactor>
    <text evidence="3">Binds 3 Mg(2+) or Mn(2+) ions per subunit.</text>
</comment>
<comment type="pathway">
    <text evidence="10">Secondary metabolite biosynthesis; terpenoid biosynthesis.</text>
</comment>
<comment type="subunit">
    <text evidence="4">Monomer.</text>
</comment>
<comment type="subcellular location">
    <subcellularLocation>
        <location evidence="5">Cytoplasm</location>
    </subcellularLocation>
</comment>
<comment type="domain">
    <text evidence="1">The Asp-Asp-Xaa-Xaa-Asp/Glu (DDXXD/E) motif is important for the catalytic activity, presumably through binding to Mg(2+).</text>
</comment>
<comment type="miscellaneous">
    <text evidence="9">The allele found in cv. B73 encodes an inactive enzyme while the two alleles found in cv. Delprim encode an active (TPS5A) and an inactive (TPS5B) enzyme (PubMed:15075399).</text>
</comment>
<comment type="similarity">
    <text evidence="8">Belongs to the terpene synthase family.</text>
</comment>
<keyword id="KW-0963">Cytoplasm</keyword>
<keyword id="KW-0460">Magnesium</keyword>
<keyword id="KW-0464">Manganese</keyword>
<keyword id="KW-0479">Metal-binding</keyword>
<keyword id="KW-1185">Reference proteome</keyword>
<gene>
    <name evidence="7" type="primary">TPS5</name>
    <name evidence="11" type="ORF">ZEAMMB73_Zm00001d024481</name>
</gene>
<feature type="chain" id="PRO_0000418853" description="Inactive sesquithujene synthase">
    <location>
        <begin position="1"/>
        <end position="554"/>
    </location>
</feature>
<feature type="short sequence motif" description="DDXXD motif" evidence="1">
    <location>
        <begin position="308"/>
        <end position="312"/>
    </location>
</feature>
<feature type="binding site" evidence="2">
    <location>
        <position position="308"/>
    </location>
    <ligand>
        <name>Mg(2+)</name>
        <dbReference type="ChEBI" id="CHEBI:18420"/>
        <label>1</label>
    </ligand>
</feature>
<feature type="binding site" evidence="2">
    <location>
        <position position="308"/>
    </location>
    <ligand>
        <name>Mg(2+)</name>
        <dbReference type="ChEBI" id="CHEBI:18420"/>
        <label>2</label>
    </ligand>
</feature>
<feature type="binding site" evidence="1">
    <location>
        <position position="308"/>
    </location>
    <ligand>
        <name>substrate</name>
    </ligand>
</feature>
<feature type="binding site" evidence="2">
    <location>
        <position position="312"/>
    </location>
    <ligand>
        <name>Mg(2+)</name>
        <dbReference type="ChEBI" id="CHEBI:18420"/>
        <label>1</label>
    </ligand>
</feature>
<feature type="binding site" evidence="2">
    <location>
        <position position="312"/>
    </location>
    <ligand>
        <name>Mg(2+)</name>
        <dbReference type="ChEBI" id="CHEBI:18420"/>
        <label>2</label>
    </ligand>
</feature>
<feature type="binding site" evidence="1">
    <location>
        <position position="312"/>
    </location>
    <ligand>
        <name>substrate</name>
    </ligand>
</feature>
<feature type="binding site" evidence="1">
    <location>
        <position position="449"/>
    </location>
    <ligand>
        <name>substrate</name>
    </ligand>
</feature>
<feature type="binding site" evidence="2">
    <location>
        <position position="452"/>
    </location>
    <ligand>
        <name>Mg(2+)</name>
        <dbReference type="ChEBI" id="CHEBI:18420"/>
        <label>3</label>
    </ligand>
</feature>
<feature type="binding site" evidence="1">
    <location>
        <position position="452"/>
    </location>
    <ligand>
        <name>substrate</name>
    </ligand>
</feature>
<feature type="binding site" evidence="2">
    <location>
        <position position="456"/>
    </location>
    <ligand>
        <name>Mg(2+)</name>
        <dbReference type="ChEBI" id="CHEBI:18420"/>
        <label>3</label>
    </ligand>
</feature>
<feature type="binding site" evidence="2">
    <location>
        <position position="460"/>
    </location>
    <ligand>
        <name>Mg(2+)</name>
        <dbReference type="ChEBI" id="CHEBI:18420"/>
        <label>3</label>
    </ligand>
</feature>
<feature type="mutagenesis site" description="Restore 60% of the activity found in cv. Delprim, ableit with an increased production of (E)-beta-farnesene. Full activity; when associated with V-455." evidence="6">
    <original>W</original>
    <variation>R</variation>
    <location>
        <position position="163"/>
    </location>
</feature>
<feature type="mutagenesis site" description="No effect on the absence of activity." evidence="6">
    <original>T</original>
    <variation>S</variation>
    <location>
        <position position="383"/>
    </location>
</feature>
<feature type="mutagenesis site" description="No effect on the absence of activity." evidence="6">
    <original>E</original>
    <variation>Q</variation>
    <location>
        <position position="391"/>
    </location>
</feature>
<feature type="mutagenesis site" description="No effect on the absence of activity." evidence="6">
    <original>K</original>
    <variation>Q</variation>
    <location>
        <position position="402"/>
    </location>
</feature>
<feature type="mutagenesis site" description="Restore 4% of the activity found in cv. Delprim, but with the same blend of products. Full activity; when associated with R-163." evidence="6">
    <original>E</original>
    <variation>V</variation>
    <location>
        <position position="455"/>
    </location>
</feature>
<feature type="mutagenesis site" description="No effect on the absence of activity." evidence="6">
    <original>I</original>
    <variation>T</variation>
    <location>
        <position position="479"/>
    </location>
</feature>
<feature type="sequence conflict" description="In Ref. 1; AAS88572." ref="1">
    <original>A</original>
    <variation>V</variation>
    <location>
        <position position="20"/>
    </location>
</feature>
<sequence length="554" mass="63841">MASPPAHRSSKAADEELPKASSTFHPSLWGSFFLTYQPPTAPQRANMKERAEVLRERVRKVLKGSTTDQLPETVNLILTLQRLGLGYYYENEIDKLLHQIYSNSDYNVKDLNLVSQRFYLLRKNGYDVPSDVFLSFKTEEGGFACAAADTRSLLSLYNAAYLWKHGEEVLDEAISSTRLRLQDLLGRLLPESPFAKEVSSSLRTPLFRRVGILEARNYIPIYETEATRNEAVLELAKLNFNLQQLDFCEELKHCSAWWNEMIAKSKLTFVRDRIVEEYFWMNGACYDPPYSLSRIILTKITGLITIIDDMFDTHGTTEDCMKFAEAFGRWDESAIHLLPEYMKDFYILMLETFQSFEDALGPEKSYRVLYLKQAMERLVELYTKEIKWRDEDYVATMSEHLKVSAESIGANALTCSAYAGMGDMSITKETFEWALSFPQFIRTFGSFVRLSNDVESTKREQTKDHSPSTVHCYMKEHGITMDDACEKIKELIEDSWKDMLEQSLALKGLPKVVPQLVFDFSRTTDNMYRDRDALTSSEALKEMIQLLFVEPIPE</sequence>
<protein>
    <recommendedName>
        <fullName evidence="7">Inactive sesquithujene synthase</fullName>
    </recommendedName>
    <alternativeName>
        <fullName evidence="7">Terpene synthase 5</fullName>
        <shortName evidence="7">tps5-B73</shortName>
    </alternativeName>
</protein>
<proteinExistence type="evidence at protein level"/>
<dbReference type="EMBL" id="AY518311">
    <property type="protein sequence ID" value="AAS88572.1"/>
    <property type="molecule type" value="mRNA"/>
</dbReference>
<dbReference type="EMBL" id="CM000786">
    <property type="protein sequence ID" value="AQK41282.1"/>
    <property type="molecule type" value="Genomic_DNA"/>
</dbReference>
<dbReference type="RefSeq" id="NP_001288477.1">
    <property type="nucleotide sequence ID" value="NM_001301548.1"/>
</dbReference>
<dbReference type="SMR" id="Q6JD72"/>
<dbReference type="STRING" id="4577.Q6JD72"/>
<dbReference type="PaxDb" id="4577-GRMZM2G074309_P01"/>
<dbReference type="EnsemblPlants" id="Zm00001eb415130_T001">
    <property type="protein sequence ID" value="Zm00001eb415130_P001"/>
    <property type="gene ID" value="Zm00001eb415130"/>
</dbReference>
<dbReference type="GeneID" id="103641226"/>
<dbReference type="Gramene" id="Zm00001eb415130_T001">
    <property type="protein sequence ID" value="Zm00001eb415130_P001"/>
    <property type="gene ID" value="Zm00001eb415130"/>
</dbReference>
<dbReference type="KEGG" id="zma:103641226"/>
<dbReference type="MaizeGDB" id="1219892"/>
<dbReference type="eggNOG" id="ENOG502QUCN">
    <property type="taxonomic scope" value="Eukaryota"/>
</dbReference>
<dbReference type="HOGENOM" id="CLU_003125_7_2_1"/>
<dbReference type="InParanoid" id="Q6JD72"/>
<dbReference type="OMA" id="TTAINRW"/>
<dbReference type="OrthoDB" id="1877784at2759"/>
<dbReference type="UniPathway" id="UPA00213"/>
<dbReference type="Proteomes" id="UP000007305">
    <property type="component" value="Chromosome 10"/>
</dbReference>
<dbReference type="ExpressionAtlas" id="Q6JD72">
    <property type="expression patterns" value="baseline and differential"/>
</dbReference>
<dbReference type="GO" id="GO:0005737">
    <property type="term" value="C:cytoplasm"/>
    <property type="evidence" value="ECO:0007669"/>
    <property type="project" value="UniProtKB-SubCell"/>
</dbReference>
<dbReference type="GO" id="GO:0000287">
    <property type="term" value="F:magnesium ion binding"/>
    <property type="evidence" value="ECO:0007669"/>
    <property type="project" value="InterPro"/>
</dbReference>
<dbReference type="GO" id="GO:0010333">
    <property type="term" value="F:terpene synthase activity"/>
    <property type="evidence" value="ECO:0007669"/>
    <property type="project" value="InterPro"/>
</dbReference>
<dbReference type="GO" id="GO:0016102">
    <property type="term" value="P:diterpenoid biosynthetic process"/>
    <property type="evidence" value="ECO:0007669"/>
    <property type="project" value="InterPro"/>
</dbReference>
<dbReference type="CDD" id="cd00684">
    <property type="entry name" value="Terpene_cyclase_plant_C1"/>
    <property type="match status" value="1"/>
</dbReference>
<dbReference type="FunFam" id="1.10.600.10:FF:000007">
    <property type="entry name" value="Isoprene synthase, chloroplastic"/>
    <property type="match status" value="1"/>
</dbReference>
<dbReference type="Gene3D" id="1.10.600.10">
    <property type="entry name" value="Farnesyl Diphosphate Synthase"/>
    <property type="match status" value="1"/>
</dbReference>
<dbReference type="Gene3D" id="1.50.10.130">
    <property type="entry name" value="Terpene synthase, N-terminal domain"/>
    <property type="match status" value="1"/>
</dbReference>
<dbReference type="InterPro" id="IPR008949">
    <property type="entry name" value="Isoprenoid_synthase_dom_sf"/>
</dbReference>
<dbReference type="InterPro" id="IPR034741">
    <property type="entry name" value="Terpene_cyclase-like_1_C"/>
</dbReference>
<dbReference type="InterPro" id="IPR044814">
    <property type="entry name" value="Terpene_cyclase_plant_C1"/>
</dbReference>
<dbReference type="InterPro" id="IPR001906">
    <property type="entry name" value="Terpene_synth_N"/>
</dbReference>
<dbReference type="InterPro" id="IPR036965">
    <property type="entry name" value="Terpene_synth_N_sf"/>
</dbReference>
<dbReference type="InterPro" id="IPR050148">
    <property type="entry name" value="Terpene_synthase-like"/>
</dbReference>
<dbReference type="InterPro" id="IPR005630">
    <property type="entry name" value="Terpene_synthase_metal-bd"/>
</dbReference>
<dbReference type="InterPro" id="IPR008930">
    <property type="entry name" value="Terpenoid_cyclase/PrenylTrfase"/>
</dbReference>
<dbReference type="PANTHER" id="PTHR31225:SF168">
    <property type="entry name" value="INACTIVE SESQUITHUJENE SYNTHASE"/>
    <property type="match status" value="1"/>
</dbReference>
<dbReference type="PANTHER" id="PTHR31225">
    <property type="entry name" value="OS04G0344100 PROTEIN-RELATED"/>
    <property type="match status" value="1"/>
</dbReference>
<dbReference type="Pfam" id="PF01397">
    <property type="entry name" value="Terpene_synth"/>
    <property type="match status" value="1"/>
</dbReference>
<dbReference type="Pfam" id="PF03936">
    <property type="entry name" value="Terpene_synth_C"/>
    <property type="match status" value="1"/>
</dbReference>
<dbReference type="SFLD" id="SFLDS00005">
    <property type="entry name" value="Isoprenoid_Synthase_Type_I"/>
    <property type="match status" value="1"/>
</dbReference>
<dbReference type="SFLD" id="SFLDG01019">
    <property type="entry name" value="Terpene_Cyclase_Like_1_C_Termi"/>
    <property type="match status" value="1"/>
</dbReference>
<dbReference type="SUPFAM" id="SSF48239">
    <property type="entry name" value="Terpenoid cyclases/Protein prenyltransferases"/>
    <property type="match status" value="1"/>
</dbReference>
<dbReference type="SUPFAM" id="SSF48576">
    <property type="entry name" value="Terpenoid synthases"/>
    <property type="match status" value="1"/>
</dbReference>